<comment type="catalytic activity">
    <reaction evidence="1">
        <text>L-glutamate + acetyl-CoA = N-acetyl-L-glutamate + CoA + H(+)</text>
        <dbReference type="Rhea" id="RHEA:24292"/>
        <dbReference type="ChEBI" id="CHEBI:15378"/>
        <dbReference type="ChEBI" id="CHEBI:29985"/>
        <dbReference type="ChEBI" id="CHEBI:44337"/>
        <dbReference type="ChEBI" id="CHEBI:57287"/>
        <dbReference type="ChEBI" id="CHEBI:57288"/>
        <dbReference type="EC" id="2.3.1.1"/>
    </reaction>
</comment>
<comment type="pathway">
    <text evidence="1">Amino-acid biosynthesis; L-arginine biosynthesis; N(2)-acetyl-L-ornithine from L-glutamate: step 1/4.</text>
</comment>
<comment type="subcellular location">
    <subcellularLocation>
        <location evidence="1">Cytoplasm</location>
    </subcellularLocation>
</comment>
<comment type="similarity">
    <text evidence="1">Belongs to the acetyltransferase family. ArgA subfamily.</text>
</comment>
<evidence type="ECO:0000255" key="1">
    <source>
        <dbReference type="HAMAP-Rule" id="MF_01105"/>
    </source>
</evidence>
<organism>
    <name type="scientific">Pseudomonas fluorescens (strain ATCC BAA-477 / NRRL B-23932 / Pf-5)</name>
    <dbReference type="NCBI Taxonomy" id="220664"/>
    <lineage>
        <taxon>Bacteria</taxon>
        <taxon>Pseudomonadati</taxon>
        <taxon>Pseudomonadota</taxon>
        <taxon>Gammaproteobacteria</taxon>
        <taxon>Pseudomonadales</taxon>
        <taxon>Pseudomonadaceae</taxon>
        <taxon>Pseudomonas</taxon>
    </lineage>
</organism>
<accession>Q4K434</accession>
<name>ARGA_PSEF5</name>
<reference key="1">
    <citation type="journal article" date="2005" name="Nat. Biotechnol.">
        <title>Complete genome sequence of the plant commensal Pseudomonas fluorescens Pf-5.</title>
        <authorList>
            <person name="Paulsen I.T."/>
            <person name="Press C.M."/>
            <person name="Ravel J."/>
            <person name="Kobayashi D.Y."/>
            <person name="Myers G.S.A."/>
            <person name="Mavrodi D.V."/>
            <person name="DeBoy R.T."/>
            <person name="Seshadri R."/>
            <person name="Ren Q."/>
            <person name="Madupu R."/>
            <person name="Dodson R.J."/>
            <person name="Durkin A.S."/>
            <person name="Brinkac L.M."/>
            <person name="Daugherty S.C."/>
            <person name="Sullivan S.A."/>
            <person name="Rosovitz M.J."/>
            <person name="Gwinn M.L."/>
            <person name="Zhou L."/>
            <person name="Schneider D.J."/>
            <person name="Cartinhour S.W."/>
            <person name="Nelson W.C."/>
            <person name="Weidman J."/>
            <person name="Watkins K."/>
            <person name="Tran K."/>
            <person name="Khouri H."/>
            <person name="Pierson E.A."/>
            <person name="Pierson L.S. III"/>
            <person name="Thomashow L.S."/>
            <person name="Loper J.E."/>
        </authorList>
    </citation>
    <scope>NUCLEOTIDE SEQUENCE [LARGE SCALE GENOMIC DNA]</scope>
    <source>
        <strain>ATCC BAA-477 / NRRL B-23932 / Pf-5</strain>
    </source>
</reference>
<dbReference type="EC" id="2.3.1.1" evidence="1"/>
<dbReference type="EMBL" id="CP000076">
    <property type="protein sequence ID" value="AAY95131.1"/>
    <property type="molecule type" value="Genomic_DNA"/>
</dbReference>
<dbReference type="RefSeq" id="WP_011064114.1">
    <property type="nucleotide sequence ID" value="NC_004129.6"/>
</dbReference>
<dbReference type="SMR" id="Q4K434"/>
<dbReference type="STRING" id="220664.PFL_5941"/>
<dbReference type="GeneID" id="57478896"/>
<dbReference type="KEGG" id="pfl:PFL_5941"/>
<dbReference type="PATRIC" id="fig|220664.5.peg.6057"/>
<dbReference type="eggNOG" id="COG0548">
    <property type="taxonomic scope" value="Bacteria"/>
</dbReference>
<dbReference type="eggNOG" id="COG1246">
    <property type="taxonomic scope" value="Bacteria"/>
</dbReference>
<dbReference type="HOGENOM" id="CLU_024773_0_0_6"/>
<dbReference type="UniPathway" id="UPA00068">
    <property type="reaction ID" value="UER00106"/>
</dbReference>
<dbReference type="Proteomes" id="UP000008540">
    <property type="component" value="Chromosome"/>
</dbReference>
<dbReference type="GO" id="GO:0005737">
    <property type="term" value="C:cytoplasm"/>
    <property type="evidence" value="ECO:0007669"/>
    <property type="project" value="UniProtKB-SubCell"/>
</dbReference>
<dbReference type="GO" id="GO:0004042">
    <property type="term" value="F:L-glutamate N-acetyltransferase activity"/>
    <property type="evidence" value="ECO:0007669"/>
    <property type="project" value="UniProtKB-UniRule"/>
</dbReference>
<dbReference type="GO" id="GO:0006526">
    <property type="term" value="P:L-arginine biosynthetic process"/>
    <property type="evidence" value="ECO:0007669"/>
    <property type="project" value="UniProtKB-UniRule"/>
</dbReference>
<dbReference type="CDD" id="cd04237">
    <property type="entry name" value="AAK_NAGS-ABP"/>
    <property type="match status" value="1"/>
</dbReference>
<dbReference type="CDD" id="cd04301">
    <property type="entry name" value="NAT_SF"/>
    <property type="match status" value="1"/>
</dbReference>
<dbReference type="Gene3D" id="3.40.630.30">
    <property type="match status" value="1"/>
</dbReference>
<dbReference type="Gene3D" id="3.40.1160.10">
    <property type="entry name" value="Acetylglutamate kinase-like"/>
    <property type="match status" value="1"/>
</dbReference>
<dbReference type="HAMAP" id="MF_01105">
    <property type="entry name" value="N_acetyl_glu_synth"/>
    <property type="match status" value="1"/>
</dbReference>
<dbReference type="InterPro" id="IPR036393">
    <property type="entry name" value="AceGlu_kinase-like_sf"/>
</dbReference>
<dbReference type="InterPro" id="IPR016181">
    <property type="entry name" value="Acyl_CoA_acyltransferase"/>
</dbReference>
<dbReference type="InterPro" id="IPR001048">
    <property type="entry name" value="Asp/Glu/Uridylate_kinase"/>
</dbReference>
<dbReference type="InterPro" id="IPR000182">
    <property type="entry name" value="GNAT_dom"/>
</dbReference>
<dbReference type="InterPro" id="IPR033719">
    <property type="entry name" value="NAGS_kin"/>
</dbReference>
<dbReference type="InterPro" id="IPR010167">
    <property type="entry name" value="NH2A_AcTrfase"/>
</dbReference>
<dbReference type="NCBIfam" id="TIGR01890">
    <property type="entry name" value="N-Ac-Glu-synth"/>
    <property type="match status" value="1"/>
</dbReference>
<dbReference type="NCBIfam" id="NF003641">
    <property type="entry name" value="PRK05279.1"/>
    <property type="match status" value="1"/>
</dbReference>
<dbReference type="PANTHER" id="PTHR30602">
    <property type="entry name" value="AMINO-ACID ACETYLTRANSFERASE"/>
    <property type="match status" value="1"/>
</dbReference>
<dbReference type="PANTHER" id="PTHR30602:SF12">
    <property type="entry name" value="AMINO-ACID ACETYLTRANSFERASE NAGS1, CHLOROPLASTIC-RELATED"/>
    <property type="match status" value="1"/>
</dbReference>
<dbReference type="Pfam" id="PF00696">
    <property type="entry name" value="AA_kinase"/>
    <property type="match status" value="1"/>
</dbReference>
<dbReference type="Pfam" id="PF13508">
    <property type="entry name" value="Acetyltransf_7"/>
    <property type="match status" value="1"/>
</dbReference>
<dbReference type="PIRSF" id="PIRSF000423">
    <property type="entry name" value="ArgA"/>
    <property type="match status" value="1"/>
</dbReference>
<dbReference type="SUPFAM" id="SSF55729">
    <property type="entry name" value="Acyl-CoA N-acyltransferases (Nat)"/>
    <property type="match status" value="1"/>
</dbReference>
<dbReference type="SUPFAM" id="SSF53633">
    <property type="entry name" value="Carbamate kinase-like"/>
    <property type="match status" value="1"/>
</dbReference>
<dbReference type="PROSITE" id="PS51186">
    <property type="entry name" value="GNAT"/>
    <property type="match status" value="1"/>
</dbReference>
<proteinExistence type="inferred from homology"/>
<gene>
    <name evidence="1" type="primary">argA</name>
    <name type="ordered locus">PFL_5941</name>
</gene>
<protein>
    <recommendedName>
        <fullName evidence="1">Amino-acid acetyltransferase</fullName>
        <ecNumber evidence="1">2.3.1.1</ecNumber>
    </recommendedName>
    <alternativeName>
        <fullName evidence="1">N-acetylglutamate synthase</fullName>
        <shortName evidence="1">AGS</shortName>
        <shortName evidence="1">NAGS</shortName>
    </alternativeName>
</protein>
<feature type="chain" id="PRO_1000084817" description="Amino-acid acetyltransferase">
    <location>
        <begin position="1"/>
        <end position="432"/>
    </location>
</feature>
<feature type="domain" description="N-acetyltransferase" evidence="1">
    <location>
        <begin position="286"/>
        <end position="425"/>
    </location>
</feature>
<sequence>MPEYVNWLRHASPYINAHRDCTFVVMLPGDGVEHPNFGNIVHDLVLLHSLGVRLVLVHGSRPQIEARLAARGLTPHYHHGLRITDAATLECVIDAVGQLRIAIEARLSMDMASSPMQGSRLRVASGNLVTARPIGVLEGVDYHHTGEVRRVDRKGINRLLDERSIVLLSPLGYSPTGETFNLACEDVATRAAIDLGADKLLLFGADPGLLDENGKLVRELRPQQVPAHLQRLGGNYQAELLDAAAEACRGGVGRSHIVSYAEDGALLTELFTRDGGGTLVAQEQFERVREAAIEDVGGLLELISPLEEQGILVRRSREVLEREIEQFSVVEREGMIIACAALYQIADSDAGELACLAVNPEYRHGKRGDELLERIETRARAQGLKTLFVLTTRTAHWFRERGFVPSSVERLPSARASLYNYQRNSKIFEKAL</sequence>
<keyword id="KW-0012">Acyltransferase</keyword>
<keyword id="KW-0028">Amino-acid biosynthesis</keyword>
<keyword id="KW-0055">Arginine biosynthesis</keyword>
<keyword id="KW-0963">Cytoplasm</keyword>
<keyword id="KW-0808">Transferase</keyword>